<feature type="chain" id="PRO_1000142370" description="Large ribosomal subunit protein uL5">
    <location>
        <begin position="1"/>
        <end position="180"/>
    </location>
</feature>
<keyword id="KW-1185">Reference proteome</keyword>
<keyword id="KW-0687">Ribonucleoprotein</keyword>
<keyword id="KW-0689">Ribosomal protein</keyword>
<keyword id="KW-0694">RNA-binding</keyword>
<keyword id="KW-0699">rRNA-binding</keyword>
<keyword id="KW-0820">tRNA-binding</keyword>
<name>RL5_CHLAA</name>
<organism>
    <name type="scientific">Chloroflexus aurantiacus (strain ATCC 29366 / DSM 635 / J-10-fl)</name>
    <dbReference type="NCBI Taxonomy" id="324602"/>
    <lineage>
        <taxon>Bacteria</taxon>
        <taxon>Bacillati</taxon>
        <taxon>Chloroflexota</taxon>
        <taxon>Chloroflexia</taxon>
        <taxon>Chloroflexales</taxon>
        <taxon>Chloroflexineae</taxon>
        <taxon>Chloroflexaceae</taxon>
        <taxon>Chloroflexus</taxon>
    </lineage>
</organism>
<dbReference type="EMBL" id="CP000909">
    <property type="protein sequence ID" value="ABY35590.1"/>
    <property type="molecule type" value="Genomic_DNA"/>
</dbReference>
<dbReference type="RefSeq" id="WP_012258243.1">
    <property type="nucleotide sequence ID" value="NC_010175.1"/>
</dbReference>
<dbReference type="RefSeq" id="YP_001635979.1">
    <property type="nucleotide sequence ID" value="NC_010175.1"/>
</dbReference>
<dbReference type="SMR" id="A9WH78"/>
<dbReference type="FunCoup" id="A9WH78">
    <property type="interactions" value="478"/>
</dbReference>
<dbReference type="STRING" id="324602.Caur_2381"/>
<dbReference type="EnsemblBacteria" id="ABY35590">
    <property type="protein sequence ID" value="ABY35590"/>
    <property type="gene ID" value="Caur_2381"/>
</dbReference>
<dbReference type="KEGG" id="cau:Caur_2381"/>
<dbReference type="PATRIC" id="fig|324602.8.peg.2695"/>
<dbReference type="eggNOG" id="COG0094">
    <property type="taxonomic scope" value="Bacteria"/>
</dbReference>
<dbReference type="HOGENOM" id="CLU_061015_2_1_0"/>
<dbReference type="InParanoid" id="A9WH78"/>
<dbReference type="Proteomes" id="UP000002008">
    <property type="component" value="Chromosome"/>
</dbReference>
<dbReference type="GO" id="GO:0022625">
    <property type="term" value="C:cytosolic large ribosomal subunit"/>
    <property type="evidence" value="ECO:0000318"/>
    <property type="project" value="GO_Central"/>
</dbReference>
<dbReference type="GO" id="GO:0003723">
    <property type="term" value="F:RNA binding"/>
    <property type="evidence" value="ECO:0000318"/>
    <property type="project" value="GO_Central"/>
</dbReference>
<dbReference type="GO" id="GO:0019843">
    <property type="term" value="F:rRNA binding"/>
    <property type="evidence" value="ECO:0007669"/>
    <property type="project" value="UniProtKB-UniRule"/>
</dbReference>
<dbReference type="GO" id="GO:0003735">
    <property type="term" value="F:structural constituent of ribosome"/>
    <property type="evidence" value="ECO:0000318"/>
    <property type="project" value="GO_Central"/>
</dbReference>
<dbReference type="GO" id="GO:0000049">
    <property type="term" value="F:tRNA binding"/>
    <property type="evidence" value="ECO:0007669"/>
    <property type="project" value="UniProtKB-UniRule"/>
</dbReference>
<dbReference type="GO" id="GO:0006412">
    <property type="term" value="P:translation"/>
    <property type="evidence" value="ECO:0000318"/>
    <property type="project" value="GO_Central"/>
</dbReference>
<dbReference type="FunFam" id="3.30.1440.10:FF:000001">
    <property type="entry name" value="50S ribosomal protein L5"/>
    <property type="match status" value="1"/>
</dbReference>
<dbReference type="Gene3D" id="3.30.1440.10">
    <property type="match status" value="1"/>
</dbReference>
<dbReference type="HAMAP" id="MF_01333_B">
    <property type="entry name" value="Ribosomal_uL5_B"/>
    <property type="match status" value="1"/>
</dbReference>
<dbReference type="InterPro" id="IPR002132">
    <property type="entry name" value="Ribosomal_uL5"/>
</dbReference>
<dbReference type="InterPro" id="IPR020930">
    <property type="entry name" value="Ribosomal_uL5_bac-type"/>
</dbReference>
<dbReference type="InterPro" id="IPR031309">
    <property type="entry name" value="Ribosomal_uL5_C"/>
</dbReference>
<dbReference type="InterPro" id="IPR020929">
    <property type="entry name" value="Ribosomal_uL5_CS"/>
</dbReference>
<dbReference type="InterPro" id="IPR022803">
    <property type="entry name" value="Ribosomal_uL5_dom_sf"/>
</dbReference>
<dbReference type="InterPro" id="IPR031310">
    <property type="entry name" value="Ribosomal_uL5_N"/>
</dbReference>
<dbReference type="NCBIfam" id="NF000585">
    <property type="entry name" value="PRK00010.1"/>
    <property type="match status" value="1"/>
</dbReference>
<dbReference type="PANTHER" id="PTHR11994">
    <property type="entry name" value="60S RIBOSOMAL PROTEIN L11-RELATED"/>
    <property type="match status" value="1"/>
</dbReference>
<dbReference type="Pfam" id="PF00281">
    <property type="entry name" value="Ribosomal_L5"/>
    <property type="match status" value="1"/>
</dbReference>
<dbReference type="Pfam" id="PF00673">
    <property type="entry name" value="Ribosomal_L5_C"/>
    <property type="match status" value="1"/>
</dbReference>
<dbReference type="PIRSF" id="PIRSF002161">
    <property type="entry name" value="Ribosomal_L5"/>
    <property type="match status" value="1"/>
</dbReference>
<dbReference type="SUPFAM" id="SSF55282">
    <property type="entry name" value="RL5-like"/>
    <property type="match status" value="1"/>
</dbReference>
<dbReference type="PROSITE" id="PS00358">
    <property type="entry name" value="RIBOSOMAL_L5"/>
    <property type="match status" value="1"/>
</dbReference>
<sequence>MTVRLREKYQKEVVPALMEEFKFKSIMQVPRLVKIVVNVGVGEAVQNAKAIEAAVNDLATITGQKPVVTRAKKSVASFKLRAGMPIGAMVTLRGDRMYDFLDRLCSLALPRIRDFRGVSRSSFDGRGNYSLGLREQIVFPDIDYDKIDKIRGLEVAIVTSAPNDEQAYALLKRLGMPFRD</sequence>
<gene>
    <name evidence="1" type="primary">rplE</name>
    <name type="ordered locus">Caur_2381</name>
</gene>
<comment type="function">
    <text evidence="1">This is one of the proteins that bind and probably mediate the attachment of the 5S RNA into the large ribosomal subunit, where it forms part of the central protuberance. In the 70S ribosome it contacts protein S13 of the 30S subunit (bridge B1b), connecting the 2 subunits; this bridge is implicated in subunit movement. Contacts the P site tRNA; the 5S rRNA and some of its associated proteins might help stabilize positioning of ribosome-bound tRNAs.</text>
</comment>
<comment type="subunit">
    <text evidence="1">Part of the 50S ribosomal subunit; part of the 5S rRNA/L5/L18/L25 subcomplex. Contacts the 5S rRNA and the P site tRNA. Forms a bridge to the 30S subunit in the 70S ribosome.</text>
</comment>
<comment type="similarity">
    <text evidence="1">Belongs to the universal ribosomal protein uL5 family.</text>
</comment>
<reference key="1">
    <citation type="journal article" date="2011" name="BMC Genomics">
        <title>Complete genome sequence of the filamentous anoxygenic phototrophic bacterium Chloroflexus aurantiacus.</title>
        <authorList>
            <person name="Tang K.H."/>
            <person name="Barry K."/>
            <person name="Chertkov O."/>
            <person name="Dalin E."/>
            <person name="Han C.S."/>
            <person name="Hauser L.J."/>
            <person name="Honchak B.M."/>
            <person name="Karbach L.E."/>
            <person name="Land M.L."/>
            <person name="Lapidus A."/>
            <person name="Larimer F.W."/>
            <person name="Mikhailova N."/>
            <person name="Pitluck S."/>
            <person name="Pierson B.K."/>
            <person name="Blankenship R.E."/>
        </authorList>
    </citation>
    <scope>NUCLEOTIDE SEQUENCE [LARGE SCALE GENOMIC DNA]</scope>
    <source>
        <strain>ATCC 29366 / DSM 635 / J-10-fl</strain>
    </source>
</reference>
<protein>
    <recommendedName>
        <fullName evidence="1">Large ribosomal subunit protein uL5</fullName>
    </recommendedName>
    <alternativeName>
        <fullName evidence="2">50S ribosomal protein L5</fullName>
    </alternativeName>
</protein>
<accession>A9WH78</accession>
<evidence type="ECO:0000255" key="1">
    <source>
        <dbReference type="HAMAP-Rule" id="MF_01333"/>
    </source>
</evidence>
<evidence type="ECO:0000305" key="2"/>
<proteinExistence type="inferred from homology"/>